<dbReference type="EMBL" id="U79753">
    <property type="protein sequence ID" value="AAB51239.1"/>
    <property type="molecule type" value="Genomic_DNA"/>
</dbReference>
<dbReference type="EMBL" id="U73902">
    <property type="protein sequence ID" value="AAD00238.1"/>
    <property type="molecule type" value="mRNA"/>
</dbReference>
<dbReference type="EMBL" id="AK146361">
    <property type="protein sequence ID" value="BAE27112.1"/>
    <property type="molecule type" value="mRNA"/>
</dbReference>
<dbReference type="EMBL" id="AK167852">
    <property type="protein sequence ID" value="BAE39870.1"/>
    <property type="molecule type" value="mRNA"/>
</dbReference>
<dbReference type="EMBL" id="CH466650">
    <property type="protein sequence ID" value="EDL29837.1"/>
    <property type="molecule type" value="Genomic_DNA"/>
</dbReference>
<dbReference type="EMBL" id="BC132131">
    <property type="protein sequence ID" value="AAI32132.1"/>
    <property type="molecule type" value="mRNA"/>
</dbReference>
<dbReference type="EMBL" id="BC132133">
    <property type="protein sequence ID" value="AAI32134.1"/>
    <property type="molecule type" value="mRNA"/>
</dbReference>
<dbReference type="CCDS" id="CCDS30222.1"/>
<dbReference type="RefSeq" id="NP_031953.1">
    <property type="nucleotide sequence ID" value="NM_007927.4"/>
</dbReference>
<dbReference type="SMR" id="O08579"/>
<dbReference type="BioGRID" id="199436">
    <property type="interactions" value="41"/>
</dbReference>
<dbReference type="FunCoup" id="O08579">
    <property type="interactions" value="1575"/>
</dbReference>
<dbReference type="IntAct" id="O08579">
    <property type="interactions" value="5"/>
</dbReference>
<dbReference type="MINT" id="O08579"/>
<dbReference type="STRING" id="10090.ENSMUSP00000002029"/>
<dbReference type="GlyGen" id="O08579">
    <property type="glycosylation" value="3 sites, 1 N-linked glycan (1 site), 1 O-linked glycan (2 sites)"/>
</dbReference>
<dbReference type="iPTMnet" id="O08579"/>
<dbReference type="PhosphoSitePlus" id="O08579"/>
<dbReference type="jPOST" id="O08579"/>
<dbReference type="PaxDb" id="10090-ENSMUSP00000002029"/>
<dbReference type="PeptideAtlas" id="O08579"/>
<dbReference type="ProteomicsDB" id="275614"/>
<dbReference type="Pumba" id="O08579"/>
<dbReference type="TopDownProteomics" id="O08579"/>
<dbReference type="Antibodypedia" id="371">
    <property type="antibodies" value="496 antibodies from 40 providers"/>
</dbReference>
<dbReference type="Ensembl" id="ENSMUST00000002029.13">
    <property type="protein sequence ID" value="ENSMUSP00000002029.7"/>
    <property type="gene ID" value="ENSMUSG00000001964.15"/>
</dbReference>
<dbReference type="GeneID" id="13726"/>
<dbReference type="KEGG" id="mmu:13726"/>
<dbReference type="UCSC" id="uc009toa.2">
    <property type="organism name" value="mouse"/>
</dbReference>
<dbReference type="AGR" id="MGI:108117"/>
<dbReference type="CTD" id="2010"/>
<dbReference type="MGI" id="MGI:108117">
    <property type="gene designation" value="Emd"/>
</dbReference>
<dbReference type="VEuPathDB" id="HostDB:ENSMUSG00000001964"/>
<dbReference type="eggNOG" id="ENOG502S5SJ">
    <property type="taxonomic scope" value="Eukaryota"/>
</dbReference>
<dbReference type="GeneTree" id="ENSGT00390000002034"/>
<dbReference type="HOGENOM" id="CLU_095531_0_0_1"/>
<dbReference type="InParanoid" id="O08579"/>
<dbReference type="OMA" id="DGNPFWA"/>
<dbReference type="OrthoDB" id="10015574at2759"/>
<dbReference type="PhylomeDB" id="O08579"/>
<dbReference type="TreeFam" id="TF337236"/>
<dbReference type="Reactome" id="R-MMU-2980766">
    <property type="pathway name" value="Nuclear Envelope Breakdown"/>
</dbReference>
<dbReference type="Reactome" id="R-MMU-2995383">
    <property type="pathway name" value="Initiation of Nuclear Envelope (NE) Reformation"/>
</dbReference>
<dbReference type="Reactome" id="R-MMU-4419969">
    <property type="pathway name" value="Depolymerization of the Nuclear Lamina"/>
</dbReference>
<dbReference type="Reactome" id="R-MMU-9013149">
    <property type="pathway name" value="RAC1 GTPase cycle"/>
</dbReference>
<dbReference type="Reactome" id="R-MMU-9013404">
    <property type="pathway name" value="RAC2 GTPase cycle"/>
</dbReference>
<dbReference type="Reactome" id="R-MMU-9013405">
    <property type="pathway name" value="RHOD GTPase cycle"/>
</dbReference>
<dbReference type="Reactome" id="R-MMU-9013408">
    <property type="pathway name" value="RHOG GTPase cycle"/>
</dbReference>
<dbReference type="Reactome" id="R-MMU-9013423">
    <property type="pathway name" value="RAC3 GTPase cycle"/>
</dbReference>
<dbReference type="Reactome" id="R-MMU-9609523">
    <property type="pathway name" value="Insertion of tail-anchored proteins into the endoplasmic reticulum membrane"/>
</dbReference>
<dbReference type="BioGRID-ORCS" id="13726">
    <property type="hits" value="0 hits in 77 CRISPR screens"/>
</dbReference>
<dbReference type="CD-CODE" id="CE726F99">
    <property type="entry name" value="Postsynaptic density"/>
</dbReference>
<dbReference type="ChiTaRS" id="Emd">
    <property type="organism name" value="mouse"/>
</dbReference>
<dbReference type="PRO" id="PR:O08579"/>
<dbReference type="Proteomes" id="UP000000589">
    <property type="component" value="Chromosome X"/>
</dbReference>
<dbReference type="RNAct" id="O08579">
    <property type="molecule type" value="protein"/>
</dbReference>
<dbReference type="Bgee" id="ENSMUSG00000001964">
    <property type="expression patterns" value="Expressed in undifferentiated genital tubercle and 250 other cell types or tissues"/>
</dbReference>
<dbReference type="ExpressionAtlas" id="O08579">
    <property type="expression patterns" value="baseline and differential"/>
</dbReference>
<dbReference type="GO" id="GO:0032541">
    <property type="term" value="C:cortical endoplasmic reticulum"/>
    <property type="evidence" value="ECO:0007669"/>
    <property type="project" value="Ensembl"/>
</dbReference>
<dbReference type="GO" id="GO:0005874">
    <property type="term" value="C:microtubule"/>
    <property type="evidence" value="ECO:0007669"/>
    <property type="project" value="UniProtKB-KW"/>
</dbReference>
<dbReference type="GO" id="GO:0005635">
    <property type="term" value="C:nuclear envelope"/>
    <property type="evidence" value="ECO:0000314"/>
    <property type="project" value="UniProtKB"/>
</dbReference>
<dbReference type="GO" id="GO:0005637">
    <property type="term" value="C:nuclear inner membrane"/>
    <property type="evidence" value="ECO:0000304"/>
    <property type="project" value="MGI"/>
</dbReference>
<dbReference type="GO" id="GO:0005652">
    <property type="term" value="C:nuclear lamina"/>
    <property type="evidence" value="ECO:0000304"/>
    <property type="project" value="MGI"/>
</dbReference>
<dbReference type="GO" id="GO:0031965">
    <property type="term" value="C:nuclear membrane"/>
    <property type="evidence" value="ECO:0000314"/>
    <property type="project" value="MGI"/>
</dbReference>
<dbReference type="GO" id="GO:0005640">
    <property type="term" value="C:nuclear outer membrane"/>
    <property type="evidence" value="ECO:0007669"/>
    <property type="project" value="UniProtKB-SubCell"/>
</dbReference>
<dbReference type="GO" id="GO:0005654">
    <property type="term" value="C:nucleoplasm"/>
    <property type="evidence" value="ECO:0007669"/>
    <property type="project" value="Ensembl"/>
</dbReference>
<dbReference type="GO" id="GO:0005634">
    <property type="term" value="C:nucleus"/>
    <property type="evidence" value="ECO:0000314"/>
    <property type="project" value="MGI"/>
</dbReference>
<dbReference type="GO" id="GO:0031616">
    <property type="term" value="C:spindle pole centrosome"/>
    <property type="evidence" value="ECO:0007669"/>
    <property type="project" value="Ensembl"/>
</dbReference>
<dbReference type="GO" id="GO:0160045">
    <property type="term" value="C:TMEM240-body"/>
    <property type="evidence" value="ECO:0000314"/>
    <property type="project" value="MGI"/>
</dbReference>
<dbReference type="GO" id="GO:0003779">
    <property type="term" value="F:actin binding"/>
    <property type="evidence" value="ECO:0007669"/>
    <property type="project" value="UniProtKB-KW"/>
</dbReference>
<dbReference type="GO" id="GO:0048487">
    <property type="term" value="F:beta-tubulin binding"/>
    <property type="evidence" value="ECO:0007669"/>
    <property type="project" value="Ensembl"/>
</dbReference>
<dbReference type="GO" id="GO:0071363">
    <property type="term" value="P:cellular response to growth factor stimulus"/>
    <property type="evidence" value="ECO:0007669"/>
    <property type="project" value="Ensembl"/>
</dbReference>
<dbReference type="GO" id="GO:0090090">
    <property type="term" value="P:negative regulation of canonical Wnt signaling pathway"/>
    <property type="evidence" value="ECO:0007669"/>
    <property type="project" value="Ensembl"/>
</dbReference>
<dbReference type="GO" id="GO:0048147">
    <property type="term" value="P:negative regulation of fibroblast proliferation"/>
    <property type="evidence" value="ECO:0007669"/>
    <property type="project" value="Ensembl"/>
</dbReference>
<dbReference type="GO" id="GO:0071763">
    <property type="term" value="P:nuclear membrane organization"/>
    <property type="evidence" value="ECO:0007669"/>
    <property type="project" value="Ensembl"/>
</dbReference>
<dbReference type="GO" id="GO:0046827">
    <property type="term" value="P:positive regulation of protein export from nucleus"/>
    <property type="evidence" value="ECO:0007669"/>
    <property type="project" value="Ensembl"/>
</dbReference>
<dbReference type="GO" id="GO:0035914">
    <property type="term" value="P:skeletal muscle cell differentiation"/>
    <property type="evidence" value="ECO:0000315"/>
    <property type="project" value="MGI"/>
</dbReference>
<dbReference type="CDD" id="cd12939">
    <property type="entry name" value="LEM_emerin"/>
    <property type="match status" value="1"/>
</dbReference>
<dbReference type="FunFam" id="1.10.720.40:FF:000001">
    <property type="entry name" value="LEM domain containing 2, isoform CRA_a"/>
    <property type="match status" value="1"/>
</dbReference>
<dbReference type="Gene3D" id="1.10.720.40">
    <property type="match status" value="1"/>
</dbReference>
<dbReference type="InterPro" id="IPR035004">
    <property type="entry name" value="Emerin"/>
</dbReference>
<dbReference type="InterPro" id="IPR011015">
    <property type="entry name" value="LEM/LEM-like_dom_sf"/>
</dbReference>
<dbReference type="InterPro" id="IPR003887">
    <property type="entry name" value="LEM_dom"/>
</dbReference>
<dbReference type="InterPro" id="IPR034989">
    <property type="entry name" value="LEM_emerin"/>
</dbReference>
<dbReference type="PANTHER" id="PTHR15171">
    <property type="entry name" value="EMERIN"/>
    <property type="match status" value="1"/>
</dbReference>
<dbReference type="PANTHER" id="PTHR15171:SF2">
    <property type="entry name" value="EMERIN"/>
    <property type="match status" value="1"/>
</dbReference>
<dbReference type="Pfam" id="PF03020">
    <property type="entry name" value="LEM"/>
    <property type="match status" value="1"/>
</dbReference>
<dbReference type="SMART" id="SM00540">
    <property type="entry name" value="LEM"/>
    <property type="match status" value="1"/>
</dbReference>
<dbReference type="SUPFAM" id="SSF63451">
    <property type="entry name" value="LEM domain"/>
    <property type="match status" value="1"/>
</dbReference>
<dbReference type="PROSITE" id="PS50954">
    <property type="entry name" value="LEM"/>
    <property type="match status" value="1"/>
</dbReference>
<accession>O08579</accession>
<accession>Q3TIH6</accession>
<accession>Q3UJP3</accession>
<feature type="chain" id="PRO_0000206141" description="Emerin">
    <location>
        <begin position="1"/>
        <end position="259"/>
    </location>
</feature>
<feature type="transmembrane region" description="Helical" evidence="4">
    <location>
        <begin position="224"/>
        <end position="244"/>
    </location>
</feature>
<feature type="domain" description="LEM" evidence="5">
    <location>
        <begin position="1"/>
        <end position="45"/>
    </location>
</feature>
<feature type="region of interest" description="Interaction with F-actin" evidence="1">
    <location>
        <begin position="46"/>
        <end position="223"/>
    </location>
</feature>
<feature type="region of interest" description="Interaction with CTNNB1" evidence="1">
    <location>
        <begin position="168"/>
        <end position="187"/>
    </location>
</feature>
<feature type="modified residue" description="N-acetylmethionine" evidence="2">
    <location>
        <position position="1"/>
    </location>
</feature>
<feature type="modified residue" description="Phosphoserine" evidence="2">
    <location>
        <position position="8"/>
    </location>
</feature>
<feature type="modified residue" description="Phosphoserine" evidence="2">
    <location>
        <position position="29"/>
    </location>
</feature>
<feature type="modified residue" description="Phosphoserine" evidence="2">
    <location>
        <position position="54"/>
    </location>
</feature>
<feature type="modified residue" description="Phosphoserine" evidence="3">
    <location>
        <position position="72"/>
    </location>
</feature>
<feature type="modified residue" description="Phosphoserine" evidence="2">
    <location>
        <position position="88"/>
    </location>
</feature>
<feature type="modified residue" description="Phosphoserine" evidence="2">
    <location>
        <position position="99"/>
    </location>
</feature>
<feature type="modified residue" description="Phosphoserine" evidence="3">
    <location>
        <position position="141"/>
    </location>
</feature>
<feature type="modified residue" description="Phosphoserine" evidence="3">
    <location>
        <position position="142"/>
    </location>
</feature>
<feature type="modified residue" description="Phosphotyrosine" evidence="12">
    <location>
        <position position="161"/>
    </location>
</feature>
<feature type="modified residue" description="Phosphoserine" evidence="2">
    <location>
        <position position="171"/>
    </location>
</feature>
<feature type="modified residue" description="Phosphoserine" evidence="2">
    <location>
        <position position="174"/>
    </location>
</feature>
<feature type="modified residue" description="Phosphoserine" evidence="13">
    <location>
        <position position="176"/>
    </location>
</feature>
<feature type="sequence conflict" description="In Ref. 3; BAE39870." evidence="11" ref="3">
    <original>Y</original>
    <variation>C</variation>
    <location>
        <position position="96"/>
    </location>
</feature>
<feature type="sequence conflict" description="In Ref. 3; BAE39870." evidence="11" ref="3">
    <original>P</original>
    <variation>H</variation>
    <location>
        <position position="254"/>
    </location>
</feature>
<keyword id="KW-0007">Acetylation</keyword>
<keyword id="KW-0009">Actin-binding</keyword>
<keyword id="KW-0472">Membrane</keyword>
<keyword id="KW-0493">Microtubule</keyword>
<keyword id="KW-0539">Nucleus</keyword>
<keyword id="KW-0597">Phosphoprotein</keyword>
<keyword id="KW-1185">Reference proteome</keyword>
<keyword id="KW-0812">Transmembrane</keyword>
<keyword id="KW-1133">Transmembrane helix</keyword>
<gene>
    <name type="primary">Emd</name>
    <name type="synonym">Sta</name>
</gene>
<proteinExistence type="evidence at protein level"/>
<reference key="1">
    <citation type="journal article" date="1997" name="Mamm. Genome">
        <title>Isolation and characterization of the complete mouse emerin gene.</title>
        <authorList>
            <person name="Small K."/>
            <person name="Wagener M."/>
            <person name="Warren S.T."/>
        </authorList>
    </citation>
    <scope>NUCLEOTIDE SEQUENCE [GENOMIC DNA]</scope>
    <scope>TISSUE SPECIFICITY</scope>
    <source>
        <strain>129</strain>
    </source>
</reference>
<reference key="2">
    <citation type="submission" date="1996-10" db="EMBL/GenBank/DDBJ databases">
        <title>cDNA sequence and analysis of the murine Emery-Dreifuss muscular dystrophy gene.</title>
        <authorList>
            <person name="Hawkes S.L.J."/>
            <person name="Neville L.A."/>
            <person name="Kennedy M.A.K."/>
            <person name="Love D.R."/>
        </authorList>
    </citation>
    <scope>NUCLEOTIDE SEQUENCE [MRNA]</scope>
    <source>
        <strain>ICR</strain>
        <tissue>Brain</tissue>
    </source>
</reference>
<reference key="3">
    <citation type="journal article" date="2005" name="Science">
        <title>The transcriptional landscape of the mammalian genome.</title>
        <authorList>
            <person name="Carninci P."/>
            <person name="Kasukawa T."/>
            <person name="Katayama S."/>
            <person name="Gough J."/>
            <person name="Frith M.C."/>
            <person name="Maeda N."/>
            <person name="Oyama R."/>
            <person name="Ravasi T."/>
            <person name="Lenhard B."/>
            <person name="Wells C."/>
            <person name="Kodzius R."/>
            <person name="Shimokawa K."/>
            <person name="Bajic V.B."/>
            <person name="Brenner S.E."/>
            <person name="Batalov S."/>
            <person name="Forrest A.R."/>
            <person name="Zavolan M."/>
            <person name="Davis M.J."/>
            <person name="Wilming L.G."/>
            <person name="Aidinis V."/>
            <person name="Allen J.E."/>
            <person name="Ambesi-Impiombato A."/>
            <person name="Apweiler R."/>
            <person name="Aturaliya R.N."/>
            <person name="Bailey T.L."/>
            <person name="Bansal M."/>
            <person name="Baxter L."/>
            <person name="Beisel K.W."/>
            <person name="Bersano T."/>
            <person name="Bono H."/>
            <person name="Chalk A.M."/>
            <person name="Chiu K.P."/>
            <person name="Choudhary V."/>
            <person name="Christoffels A."/>
            <person name="Clutterbuck D.R."/>
            <person name="Crowe M.L."/>
            <person name="Dalla E."/>
            <person name="Dalrymple B.P."/>
            <person name="de Bono B."/>
            <person name="Della Gatta G."/>
            <person name="di Bernardo D."/>
            <person name="Down T."/>
            <person name="Engstrom P."/>
            <person name="Fagiolini M."/>
            <person name="Faulkner G."/>
            <person name="Fletcher C.F."/>
            <person name="Fukushima T."/>
            <person name="Furuno M."/>
            <person name="Futaki S."/>
            <person name="Gariboldi M."/>
            <person name="Georgii-Hemming P."/>
            <person name="Gingeras T.R."/>
            <person name="Gojobori T."/>
            <person name="Green R.E."/>
            <person name="Gustincich S."/>
            <person name="Harbers M."/>
            <person name="Hayashi Y."/>
            <person name="Hensch T.K."/>
            <person name="Hirokawa N."/>
            <person name="Hill D."/>
            <person name="Huminiecki L."/>
            <person name="Iacono M."/>
            <person name="Ikeo K."/>
            <person name="Iwama A."/>
            <person name="Ishikawa T."/>
            <person name="Jakt M."/>
            <person name="Kanapin A."/>
            <person name="Katoh M."/>
            <person name="Kawasawa Y."/>
            <person name="Kelso J."/>
            <person name="Kitamura H."/>
            <person name="Kitano H."/>
            <person name="Kollias G."/>
            <person name="Krishnan S.P."/>
            <person name="Kruger A."/>
            <person name="Kummerfeld S.K."/>
            <person name="Kurochkin I.V."/>
            <person name="Lareau L.F."/>
            <person name="Lazarevic D."/>
            <person name="Lipovich L."/>
            <person name="Liu J."/>
            <person name="Liuni S."/>
            <person name="McWilliam S."/>
            <person name="Madan Babu M."/>
            <person name="Madera M."/>
            <person name="Marchionni L."/>
            <person name="Matsuda H."/>
            <person name="Matsuzawa S."/>
            <person name="Miki H."/>
            <person name="Mignone F."/>
            <person name="Miyake S."/>
            <person name="Morris K."/>
            <person name="Mottagui-Tabar S."/>
            <person name="Mulder N."/>
            <person name="Nakano N."/>
            <person name="Nakauchi H."/>
            <person name="Ng P."/>
            <person name="Nilsson R."/>
            <person name="Nishiguchi S."/>
            <person name="Nishikawa S."/>
            <person name="Nori F."/>
            <person name="Ohara O."/>
            <person name="Okazaki Y."/>
            <person name="Orlando V."/>
            <person name="Pang K.C."/>
            <person name="Pavan W.J."/>
            <person name="Pavesi G."/>
            <person name="Pesole G."/>
            <person name="Petrovsky N."/>
            <person name="Piazza S."/>
            <person name="Reed J."/>
            <person name="Reid J.F."/>
            <person name="Ring B.Z."/>
            <person name="Ringwald M."/>
            <person name="Rost B."/>
            <person name="Ruan Y."/>
            <person name="Salzberg S.L."/>
            <person name="Sandelin A."/>
            <person name="Schneider C."/>
            <person name="Schoenbach C."/>
            <person name="Sekiguchi K."/>
            <person name="Semple C.A."/>
            <person name="Seno S."/>
            <person name="Sessa L."/>
            <person name="Sheng Y."/>
            <person name="Shibata Y."/>
            <person name="Shimada H."/>
            <person name="Shimada K."/>
            <person name="Silva D."/>
            <person name="Sinclair B."/>
            <person name="Sperling S."/>
            <person name="Stupka E."/>
            <person name="Sugiura K."/>
            <person name="Sultana R."/>
            <person name="Takenaka Y."/>
            <person name="Taki K."/>
            <person name="Tammoja K."/>
            <person name="Tan S.L."/>
            <person name="Tang S."/>
            <person name="Taylor M.S."/>
            <person name="Tegner J."/>
            <person name="Teichmann S.A."/>
            <person name="Ueda H.R."/>
            <person name="van Nimwegen E."/>
            <person name="Verardo R."/>
            <person name="Wei C.L."/>
            <person name="Yagi K."/>
            <person name="Yamanishi H."/>
            <person name="Zabarovsky E."/>
            <person name="Zhu S."/>
            <person name="Zimmer A."/>
            <person name="Hide W."/>
            <person name="Bult C."/>
            <person name="Grimmond S.M."/>
            <person name="Teasdale R.D."/>
            <person name="Liu E.T."/>
            <person name="Brusic V."/>
            <person name="Quackenbush J."/>
            <person name="Wahlestedt C."/>
            <person name="Mattick J.S."/>
            <person name="Hume D.A."/>
            <person name="Kai C."/>
            <person name="Sasaki D."/>
            <person name="Tomaru Y."/>
            <person name="Fukuda S."/>
            <person name="Kanamori-Katayama M."/>
            <person name="Suzuki M."/>
            <person name="Aoki J."/>
            <person name="Arakawa T."/>
            <person name="Iida J."/>
            <person name="Imamura K."/>
            <person name="Itoh M."/>
            <person name="Kato T."/>
            <person name="Kawaji H."/>
            <person name="Kawagashira N."/>
            <person name="Kawashima T."/>
            <person name="Kojima M."/>
            <person name="Kondo S."/>
            <person name="Konno H."/>
            <person name="Nakano K."/>
            <person name="Ninomiya N."/>
            <person name="Nishio T."/>
            <person name="Okada M."/>
            <person name="Plessy C."/>
            <person name="Shibata K."/>
            <person name="Shiraki T."/>
            <person name="Suzuki S."/>
            <person name="Tagami M."/>
            <person name="Waki K."/>
            <person name="Watahiki A."/>
            <person name="Okamura-Oho Y."/>
            <person name="Suzuki H."/>
            <person name="Kawai J."/>
            <person name="Hayashizaki Y."/>
        </authorList>
    </citation>
    <scope>NUCLEOTIDE SEQUENCE [LARGE SCALE MRNA]</scope>
    <source>
        <strain>DBA/2J</strain>
    </source>
</reference>
<reference key="4">
    <citation type="submission" date="2005-07" db="EMBL/GenBank/DDBJ databases">
        <authorList>
            <person name="Mural R.J."/>
            <person name="Adams M.D."/>
            <person name="Myers E.W."/>
            <person name="Smith H.O."/>
            <person name="Venter J.C."/>
        </authorList>
    </citation>
    <scope>NUCLEOTIDE SEQUENCE [LARGE SCALE GENOMIC DNA]</scope>
</reference>
<reference key="5">
    <citation type="journal article" date="2004" name="Genome Res.">
        <title>The status, quality, and expansion of the NIH full-length cDNA project: the Mammalian Gene Collection (MGC).</title>
        <authorList>
            <consortium name="The MGC Project Team"/>
        </authorList>
    </citation>
    <scope>NUCLEOTIDE SEQUENCE [LARGE SCALE MRNA]</scope>
    <source>
        <tissue>Brain</tissue>
    </source>
</reference>
<reference key="6">
    <citation type="journal article" date="1999" name="J. Cell Biol.">
        <title>Loss of A-type lamin expression compromises nuclear envelope integrity leading to muscular dystrophy.</title>
        <authorList>
            <person name="Sullivan T."/>
            <person name="Escalante-Alcalde D."/>
            <person name="Bhatt H."/>
            <person name="Anver M."/>
            <person name="Bhat N."/>
            <person name="Nagashima K."/>
            <person name="Stewart C.L."/>
            <person name="Burke B."/>
        </authorList>
    </citation>
    <scope>SUBCELLULAR LOCATION</scope>
    <scope>TISSUE SPECIFICITY</scope>
</reference>
<reference key="7">
    <citation type="journal article" date="2008" name="J. Cell Sci.">
        <title>LUMA interacts with emerin and influences its distribution at the inner nuclear membrane.</title>
        <authorList>
            <person name="Bengtsson L."/>
            <person name="Otto H."/>
        </authorList>
    </citation>
    <scope>INTERACTION WITH TMEM43</scope>
    <scope>SUBCELLULAR LOCATION</scope>
</reference>
<reference key="8">
    <citation type="journal article" date="2009" name="Mol. Cell. Proteomics">
        <title>Large scale localization of protein phosphorylation by use of electron capture dissociation mass spectrometry.</title>
        <authorList>
            <person name="Sweet S.M."/>
            <person name="Bailey C.M."/>
            <person name="Cunningham D.L."/>
            <person name="Heath J.K."/>
            <person name="Cooper H.J."/>
        </authorList>
    </citation>
    <scope>PHOSPHORYLATION [LARGE SCALE ANALYSIS] AT TYR-161</scope>
    <scope>IDENTIFICATION BY MASS SPECTROMETRY [LARGE SCALE ANALYSIS]</scope>
    <source>
        <tissue>Embryonic fibroblast</tissue>
    </source>
</reference>
<reference key="9">
    <citation type="journal article" date="2010" name="Cell">
        <title>A tissue-specific atlas of mouse protein phosphorylation and expression.</title>
        <authorList>
            <person name="Huttlin E.L."/>
            <person name="Jedrychowski M.P."/>
            <person name="Elias J.E."/>
            <person name="Goswami T."/>
            <person name="Rad R."/>
            <person name="Beausoleil S.A."/>
            <person name="Villen J."/>
            <person name="Haas W."/>
            <person name="Sowa M.E."/>
            <person name="Gygi S.P."/>
        </authorList>
    </citation>
    <scope>PHOSPHORYLATION [LARGE SCALE ANALYSIS] AT SER-176</scope>
    <scope>IDENTIFICATION BY MASS SPECTROMETRY [LARGE SCALE ANALYSIS]</scope>
    <source>
        <tissue>Brain</tissue>
        <tissue>Brown adipose tissue</tissue>
        <tissue>Heart</tissue>
        <tissue>Kidney</tissue>
        <tissue>Liver</tissue>
        <tissue>Lung</tissue>
        <tissue>Pancreas</tissue>
        <tissue>Spleen</tissue>
        <tissue>Testis</tissue>
    </source>
</reference>
<reference key="10">
    <citation type="journal article" date="2010" name="J. Biol. Chem.">
        <title>Mammalian SUN protein interaction networks at the inner nuclear membrane and their role in laminopathy disease processes.</title>
        <authorList>
            <person name="Haque F."/>
            <person name="Mazzeo D."/>
            <person name="Patel J.T."/>
            <person name="Smallwood D.T."/>
            <person name="Ellis J.A."/>
            <person name="Shanahan C.M."/>
            <person name="Shackleton S."/>
        </authorList>
    </citation>
    <scope>INTERACTION WITH SUN1 AND SUN2</scope>
</reference>
<reference key="11">
    <citation type="journal article" date="2020" name="Sci. Adv.">
        <title>The NEMP family supports metazoan fertility and nuclear envelope stiffness.</title>
        <authorList>
            <person name="Tsatskis Y."/>
            <person name="Rosenfeld R."/>
            <person name="Pearson J.D."/>
            <person name="Boswell C."/>
            <person name="Qu Y."/>
            <person name="Kim K."/>
            <person name="Fabian L."/>
            <person name="Mohammad A."/>
            <person name="Wang X."/>
            <person name="Robson M.I."/>
            <person name="Krchma K."/>
            <person name="Wu J."/>
            <person name="Goncalves J."/>
            <person name="Hodzic D."/>
            <person name="Wu S."/>
            <person name="Potter D."/>
            <person name="Pelletier L."/>
            <person name="Dunham W.H."/>
            <person name="Gingras A.C."/>
            <person name="Sun Y."/>
            <person name="Meng J."/>
            <person name="Godt D."/>
            <person name="Schedl T."/>
            <person name="Ciruna B."/>
            <person name="Choi K."/>
            <person name="Perry J.R.B."/>
            <person name="Bremner R."/>
            <person name="Schirmer E.C."/>
            <person name="Brill J.A."/>
            <person name="Jurisicova A."/>
            <person name="McNeill H."/>
        </authorList>
    </citation>
    <scope>TISSUE SPECIFICITY</scope>
    <scope>DISRUPTION PHENOTYPE</scope>
</reference>
<name>EMD_MOUSE</name>
<sequence>MDDYAVLSDTELAAVLRQYNIPHGPIVGSTRKLYEKKIFEYETQRRRLLPPNSSSSSFSYQFSDLDSAAVDSDMYDLPKKEDALLYQSKDYNDDYYEESYLTTKTYGEPESVGMSKSFRQPGTSLVDADTFHHQVRDDIFSSLEEEGKDRERLIYGQDSAYQSIAHYRPISNVSRSSLGLSYYPTSSTSSVSSSSSSPSSWLTRRAIRPEKQAPAAALGQDRQVPLWGQLLLFLVFAAFLLFVYYSIQAEEGNPFWMDP</sequence>
<evidence type="ECO:0000250" key="1"/>
<evidence type="ECO:0000250" key="2">
    <source>
        <dbReference type="UniProtKB" id="P50402"/>
    </source>
</evidence>
<evidence type="ECO:0000250" key="3">
    <source>
        <dbReference type="UniProtKB" id="Q63190"/>
    </source>
</evidence>
<evidence type="ECO:0000255" key="4"/>
<evidence type="ECO:0000255" key="5">
    <source>
        <dbReference type="PROSITE-ProRule" id="PRU00313"/>
    </source>
</evidence>
<evidence type="ECO:0000269" key="6">
    <source>
    </source>
</evidence>
<evidence type="ECO:0000269" key="7">
    <source>
    </source>
</evidence>
<evidence type="ECO:0000269" key="8">
    <source>
    </source>
</evidence>
<evidence type="ECO:0000269" key="9">
    <source>
    </source>
</evidence>
<evidence type="ECO:0000269" key="10">
    <source>
    </source>
</evidence>
<evidence type="ECO:0000305" key="11"/>
<evidence type="ECO:0007744" key="12">
    <source>
    </source>
</evidence>
<evidence type="ECO:0007744" key="13">
    <source>
    </source>
</evidence>
<protein>
    <recommendedName>
        <fullName>Emerin</fullName>
    </recommendedName>
</protein>
<organism>
    <name type="scientific">Mus musculus</name>
    <name type="common">Mouse</name>
    <dbReference type="NCBI Taxonomy" id="10090"/>
    <lineage>
        <taxon>Eukaryota</taxon>
        <taxon>Metazoa</taxon>
        <taxon>Chordata</taxon>
        <taxon>Craniata</taxon>
        <taxon>Vertebrata</taxon>
        <taxon>Euteleostomi</taxon>
        <taxon>Mammalia</taxon>
        <taxon>Eutheria</taxon>
        <taxon>Euarchontoglires</taxon>
        <taxon>Glires</taxon>
        <taxon>Rodentia</taxon>
        <taxon>Myomorpha</taxon>
        <taxon>Muroidea</taxon>
        <taxon>Muridae</taxon>
        <taxon>Murinae</taxon>
        <taxon>Mus</taxon>
        <taxon>Mus</taxon>
    </lineage>
</organism>
<comment type="function">
    <text evidence="2">Stabilizes and promotes the formation of a nuclear actin cortical network. Stimulates actin polymerization in vitro by binding and stabilizing the pointed end of growing filaments. Inhibits beta-catenin activity by preventing its accumulation in the nucleus. Acts by influencing the nuclear accumulation of beta-catenin through a CRM1-dependent export pathway. Links centrosomes to the nuclear envelope via a microtubule association. Required for proper localization of non-farnesylated prelamin-A/C. Together with NEMP1, contributes to nuclear envelope stiffness in germ cells.</text>
</comment>
<comment type="subunit">
    <text evidence="2 7 8">Interacts with lamins A and C, BANF1, GMCL, BCLAF1 and YTHDC1/YT521. Interacts with TMEM43; the interaction retains emerin in the inner nuclear membrane. Interacts with ACTB, SPTAN1, F-actin, CTNNB1 and beta-tubulin (By similarity). Interacts with SUN1 and SUN2. Interacts with TMEM201. Interacts with NEMP1 (By similarity).</text>
</comment>
<comment type="subcellular location">
    <subcellularLocation>
        <location evidence="2">Nucleus inner membrane</location>
        <topology>Single-pass membrane protein</topology>
        <orientation evidence="2">Nucleoplasmic side</orientation>
    </subcellularLocation>
    <subcellularLocation>
        <location>Nucleus outer membrane</location>
    </subcellularLocation>
    <text evidence="1">Colocalized with BANF1 at the central region of the assembling nuclear rim, near spindle-attachment sites. The accumulation of different intermediates of prelamin-A/C (non-farnesylated or carboxymethylated farnesylated prelamin-A/C) in fibroblasts modify its localization in the nucleus (By similarity).</text>
</comment>
<comment type="tissue specificity">
    <text evidence="6 9 10">In the ovary, highest expression is seen in primordial follicle oocytes (at protein level) (PubMed:32923640). Detected in embryonic fibroblasts, skeletal muscle, heart muscle and tongue epithelium (at protein level). Widely expressed.</text>
</comment>
<comment type="disruption phenotype">
    <text evidence="9">Early and highly significant depletion of primordial follicles.</text>
</comment>